<evidence type="ECO:0000255" key="1">
    <source>
        <dbReference type="HAMAP-Rule" id="MF_00821"/>
    </source>
</evidence>
<gene>
    <name evidence="1" type="primary">secB</name>
    <name type="ordered locus">SPA3553</name>
</gene>
<dbReference type="EMBL" id="CP000026">
    <property type="protein sequence ID" value="AAV79354.1"/>
    <property type="molecule type" value="Genomic_DNA"/>
</dbReference>
<dbReference type="RefSeq" id="WP_000003370.1">
    <property type="nucleotide sequence ID" value="NC_006511.1"/>
</dbReference>
<dbReference type="SMR" id="Q5PBZ5"/>
<dbReference type="KEGG" id="spt:SPA3553"/>
<dbReference type="HOGENOM" id="CLU_111574_1_0_6"/>
<dbReference type="Proteomes" id="UP000008185">
    <property type="component" value="Chromosome"/>
</dbReference>
<dbReference type="GO" id="GO:0005737">
    <property type="term" value="C:cytoplasm"/>
    <property type="evidence" value="ECO:0007669"/>
    <property type="project" value="UniProtKB-SubCell"/>
</dbReference>
<dbReference type="GO" id="GO:0051082">
    <property type="term" value="F:unfolded protein binding"/>
    <property type="evidence" value="ECO:0007669"/>
    <property type="project" value="InterPro"/>
</dbReference>
<dbReference type="GO" id="GO:0006457">
    <property type="term" value="P:protein folding"/>
    <property type="evidence" value="ECO:0007669"/>
    <property type="project" value="UniProtKB-UniRule"/>
</dbReference>
<dbReference type="GO" id="GO:0051262">
    <property type="term" value="P:protein tetramerization"/>
    <property type="evidence" value="ECO:0007669"/>
    <property type="project" value="InterPro"/>
</dbReference>
<dbReference type="GO" id="GO:0015031">
    <property type="term" value="P:protein transport"/>
    <property type="evidence" value="ECO:0007669"/>
    <property type="project" value="UniProtKB-UniRule"/>
</dbReference>
<dbReference type="CDD" id="cd00557">
    <property type="entry name" value="Translocase_SecB"/>
    <property type="match status" value="1"/>
</dbReference>
<dbReference type="FunFam" id="3.10.420.10:FF:000001">
    <property type="entry name" value="Protein-export chaperone SecB"/>
    <property type="match status" value="1"/>
</dbReference>
<dbReference type="Gene3D" id="3.10.420.10">
    <property type="entry name" value="SecB-like"/>
    <property type="match status" value="1"/>
</dbReference>
<dbReference type="HAMAP" id="MF_00821">
    <property type="entry name" value="SecB"/>
    <property type="match status" value="1"/>
</dbReference>
<dbReference type="InterPro" id="IPR003708">
    <property type="entry name" value="SecB"/>
</dbReference>
<dbReference type="InterPro" id="IPR035958">
    <property type="entry name" value="SecB-like_sf"/>
</dbReference>
<dbReference type="NCBIfam" id="NF004390">
    <property type="entry name" value="PRK05751.1-1"/>
    <property type="match status" value="1"/>
</dbReference>
<dbReference type="NCBIfam" id="NF004393">
    <property type="entry name" value="PRK05751.1-4"/>
    <property type="match status" value="1"/>
</dbReference>
<dbReference type="NCBIfam" id="TIGR00809">
    <property type="entry name" value="secB"/>
    <property type="match status" value="1"/>
</dbReference>
<dbReference type="PANTHER" id="PTHR36918">
    <property type="match status" value="1"/>
</dbReference>
<dbReference type="PANTHER" id="PTHR36918:SF1">
    <property type="entry name" value="PROTEIN-EXPORT PROTEIN SECB"/>
    <property type="match status" value="1"/>
</dbReference>
<dbReference type="Pfam" id="PF02556">
    <property type="entry name" value="SecB"/>
    <property type="match status" value="1"/>
</dbReference>
<dbReference type="PRINTS" id="PR01594">
    <property type="entry name" value="SECBCHAPRONE"/>
</dbReference>
<dbReference type="SUPFAM" id="SSF54611">
    <property type="entry name" value="SecB-like"/>
    <property type="match status" value="1"/>
</dbReference>
<keyword id="KW-0143">Chaperone</keyword>
<keyword id="KW-0963">Cytoplasm</keyword>
<keyword id="KW-0653">Protein transport</keyword>
<keyword id="KW-0811">Translocation</keyword>
<keyword id="KW-0813">Transport</keyword>
<protein>
    <recommendedName>
        <fullName evidence="1">Protein-export protein SecB</fullName>
    </recommendedName>
</protein>
<comment type="function">
    <text evidence="1">One of the proteins required for the normal export of preproteins out of the cell cytoplasm. It is a molecular chaperone that binds to a subset of precursor proteins, maintaining them in a translocation-competent state. It also specifically binds to its receptor SecA.</text>
</comment>
<comment type="subunit">
    <text evidence="1">Homotetramer, a dimer of dimers. One homotetramer interacts with 1 SecA dimer.</text>
</comment>
<comment type="subcellular location">
    <subcellularLocation>
        <location evidence="1">Cytoplasm</location>
    </subcellularLocation>
</comment>
<comment type="similarity">
    <text evidence="1">Belongs to the SecB family.</text>
</comment>
<accession>Q5PBZ5</accession>
<organism>
    <name type="scientific">Salmonella paratyphi A (strain ATCC 9150 / SARB42)</name>
    <dbReference type="NCBI Taxonomy" id="295319"/>
    <lineage>
        <taxon>Bacteria</taxon>
        <taxon>Pseudomonadati</taxon>
        <taxon>Pseudomonadota</taxon>
        <taxon>Gammaproteobacteria</taxon>
        <taxon>Enterobacterales</taxon>
        <taxon>Enterobacteriaceae</taxon>
        <taxon>Salmonella</taxon>
    </lineage>
</organism>
<reference key="1">
    <citation type="journal article" date="2004" name="Nat. Genet.">
        <title>Comparison of genome degradation in Paratyphi A and Typhi, human-restricted serovars of Salmonella enterica that cause typhoid.</title>
        <authorList>
            <person name="McClelland M."/>
            <person name="Sanderson K.E."/>
            <person name="Clifton S.W."/>
            <person name="Latreille P."/>
            <person name="Porwollik S."/>
            <person name="Sabo A."/>
            <person name="Meyer R."/>
            <person name="Bieri T."/>
            <person name="Ozersky P."/>
            <person name="McLellan M."/>
            <person name="Harkins C.R."/>
            <person name="Wang C."/>
            <person name="Nguyen C."/>
            <person name="Berghoff A."/>
            <person name="Elliott G."/>
            <person name="Kohlberg S."/>
            <person name="Strong C."/>
            <person name="Du F."/>
            <person name="Carter J."/>
            <person name="Kremizki C."/>
            <person name="Layman D."/>
            <person name="Leonard S."/>
            <person name="Sun H."/>
            <person name="Fulton L."/>
            <person name="Nash W."/>
            <person name="Miner T."/>
            <person name="Minx P."/>
            <person name="Delehaunty K."/>
            <person name="Fronick C."/>
            <person name="Magrini V."/>
            <person name="Nhan M."/>
            <person name="Warren W."/>
            <person name="Florea L."/>
            <person name="Spieth J."/>
            <person name="Wilson R.K."/>
        </authorList>
    </citation>
    <scope>NUCLEOTIDE SEQUENCE [LARGE SCALE GENOMIC DNA]</scope>
    <source>
        <strain>ATCC 9150 / SARB42</strain>
    </source>
</reference>
<sequence length="155" mass="17245">MSEQNNTEMAFQIQRIYTKDVSFEAPNAPHVFQKDWQPEVKLDLDTASSQLADDVYEVVLRVTVTASLGEETAFLCEVQQAGIFSISGIEGTQMAHCLGAYCPNILFPYARECITSLVSRGTFPQLNLAPVNFDALFMNYLQQQAGEGTEEHQDA</sequence>
<name>SECB_SALPA</name>
<feature type="chain" id="PRO_0000055413" description="Protein-export protein SecB">
    <location>
        <begin position="1"/>
        <end position="155"/>
    </location>
</feature>
<proteinExistence type="inferred from homology"/>